<proteinExistence type="inferred from homology"/>
<name>RL9_SYNR3</name>
<dbReference type="EMBL" id="CT978603">
    <property type="protein sequence ID" value="CAK29299.1"/>
    <property type="molecule type" value="Genomic_DNA"/>
</dbReference>
<dbReference type="SMR" id="A5GWP0"/>
<dbReference type="STRING" id="316278.SynRCC307_2396"/>
<dbReference type="KEGG" id="syr:SynRCC307_2396"/>
<dbReference type="eggNOG" id="COG0359">
    <property type="taxonomic scope" value="Bacteria"/>
</dbReference>
<dbReference type="HOGENOM" id="CLU_078938_5_1_3"/>
<dbReference type="OrthoDB" id="9788336at2"/>
<dbReference type="Proteomes" id="UP000001115">
    <property type="component" value="Chromosome"/>
</dbReference>
<dbReference type="GO" id="GO:1990904">
    <property type="term" value="C:ribonucleoprotein complex"/>
    <property type="evidence" value="ECO:0007669"/>
    <property type="project" value="UniProtKB-KW"/>
</dbReference>
<dbReference type="GO" id="GO:0005840">
    <property type="term" value="C:ribosome"/>
    <property type="evidence" value="ECO:0007669"/>
    <property type="project" value="UniProtKB-KW"/>
</dbReference>
<dbReference type="GO" id="GO:0019843">
    <property type="term" value="F:rRNA binding"/>
    <property type="evidence" value="ECO:0007669"/>
    <property type="project" value="UniProtKB-UniRule"/>
</dbReference>
<dbReference type="GO" id="GO:0003735">
    <property type="term" value="F:structural constituent of ribosome"/>
    <property type="evidence" value="ECO:0007669"/>
    <property type="project" value="InterPro"/>
</dbReference>
<dbReference type="GO" id="GO:0006412">
    <property type="term" value="P:translation"/>
    <property type="evidence" value="ECO:0007669"/>
    <property type="project" value="UniProtKB-UniRule"/>
</dbReference>
<dbReference type="Gene3D" id="3.10.430.100">
    <property type="entry name" value="Ribosomal protein L9, C-terminal domain"/>
    <property type="match status" value="1"/>
</dbReference>
<dbReference type="Gene3D" id="3.40.5.10">
    <property type="entry name" value="Ribosomal protein L9, N-terminal domain"/>
    <property type="match status" value="1"/>
</dbReference>
<dbReference type="HAMAP" id="MF_00503">
    <property type="entry name" value="Ribosomal_bL9"/>
    <property type="match status" value="1"/>
</dbReference>
<dbReference type="InterPro" id="IPR000244">
    <property type="entry name" value="Ribosomal_bL9"/>
</dbReference>
<dbReference type="InterPro" id="IPR009027">
    <property type="entry name" value="Ribosomal_bL9/RNase_H1_N"/>
</dbReference>
<dbReference type="InterPro" id="IPR020594">
    <property type="entry name" value="Ribosomal_bL9_bac/chp"/>
</dbReference>
<dbReference type="InterPro" id="IPR020069">
    <property type="entry name" value="Ribosomal_bL9_C"/>
</dbReference>
<dbReference type="InterPro" id="IPR036791">
    <property type="entry name" value="Ribosomal_bL9_C_sf"/>
</dbReference>
<dbReference type="InterPro" id="IPR020070">
    <property type="entry name" value="Ribosomal_bL9_N"/>
</dbReference>
<dbReference type="InterPro" id="IPR036935">
    <property type="entry name" value="Ribosomal_bL9_N_sf"/>
</dbReference>
<dbReference type="NCBIfam" id="TIGR00158">
    <property type="entry name" value="L9"/>
    <property type="match status" value="1"/>
</dbReference>
<dbReference type="PANTHER" id="PTHR21368">
    <property type="entry name" value="50S RIBOSOMAL PROTEIN L9"/>
    <property type="match status" value="1"/>
</dbReference>
<dbReference type="Pfam" id="PF03948">
    <property type="entry name" value="Ribosomal_L9_C"/>
    <property type="match status" value="1"/>
</dbReference>
<dbReference type="Pfam" id="PF01281">
    <property type="entry name" value="Ribosomal_L9_N"/>
    <property type="match status" value="1"/>
</dbReference>
<dbReference type="SUPFAM" id="SSF55658">
    <property type="entry name" value="L9 N-domain-like"/>
    <property type="match status" value="1"/>
</dbReference>
<dbReference type="SUPFAM" id="SSF55653">
    <property type="entry name" value="Ribosomal protein L9 C-domain"/>
    <property type="match status" value="1"/>
</dbReference>
<dbReference type="PROSITE" id="PS00651">
    <property type="entry name" value="RIBOSOMAL_L9"/>
    <property type="match status" value="1"/>
</dbReference>
<feature type="chain" id="PRO_1000014877" description="Large ribosomal subunit protein bL9">
    <location>
        <begin position="1"/>
        <end position="152"/>
    </location>
</feature>
<comment type="function">
    <text evidence="1">Binds to the 23S rRNA.</text>
</comment>
<comment type="similarity">
    <text evidence="1">Belongs to the bacterial ribosomal protein bL9 family.</text>
</comment>
<evidence type="ECO:0000255" key="1">
    <source>
        <dbReference type="HAMAP-Rule" id="MF_00503"/>
    </source>
</evidence>
<evidence type="ECO:0000305" key="2"/>
<sequence>MAKRVQVVLSEDILSLGKDGDLVEVAPGYARNFLLPHGKALPVTPAVLKQVEHRRAKEAERLAALKADAVAFRTALDTIGRFTVKKQTGGDDVLFGTVTNVDVAEAIESATKKLVDKRDITVPEVHRTGNYKVQVKLHPEVVAEINLEVVSH</sequence>
<gene>
    <name evidence="1" type="primary">rplI</name>
    <name evidence="1" type="synonym">rpl9</name>
    <name type="ordered locus">SynRCC307_2396</name>
</gene>
<keyword id="KW-1185">Reference proteome</keyword>
<keyword id="KW-0687">Ribonucleoprotein</keyword>
<keyword id="KW-0689">Ribosomal protein</keyword>
<keyword id="KW-0694">RNA-binding</keyword>
<keyword id="KW-0699">rRNA-binding</keyword>
<reference key="1">
    <citation type="submission" date="2006-05" db="EMBL/GenBank/DDBJ databases">
        <authorList>
            <consortium name="Genoscope"/>
        </authorList>
    </citation>
    <scope>NUCLEOTIDE SEQUENCE [LARGE SCALE GENOMIC DNA]</scope>
    <source>
        <strain>RCC307</strain>
    </source>
</reference>
<organism>
    <name type="scientific">Synechococcus sp. (strain RCC307)</name>
    <dbReference type="NCBI Taxonomy" id="316278"/>
    <lineage>
        <taxon>Bacteria</taxon>
        <taxon>Bacillati</taxon>
        <taxon>Cyanobacteriota</taxon>
        <taxon>Cyanophyceae</taxon>
        <taxon>Synechococcales</taxon>
        <taxon>Synechococcaceae</taxon>
        <taxon>Synechococcus</taxon>
    </lineage>
</organism>
<protein>
    <recommendedName>
        <fullName evidence="1">Large ribosomal subunit protein bL9</fullName>
    </recommendedName>
    <alternativeName>
        <fullName evidence="2">50S ribosomal protein L9</fullName>
    </alternativeName>
</protein>
<accession>A5GWP0</accession>